<protein>
    <recommendedName>
        <fullName evidence="1">2,3-bisphosphoglycerate-independent phosphoglycerate mutase</fullName>
        <shortName evidence="1">BPG-independent PGAM</shortName>
        <shortName evidence="1">Phosphoglyceromutase</shortName>
        <shortName evidence="1">iPGM</shortName>
        <ecNumber evidence="1">5.4.2.12</ecNumber>
    </recommendedName>
</protein>
<proteinExistence type="inferred from homology"/>
<feature type="chain" id="PRO_0000212191" description="2,3-bisphosphoglycerate-independent phosphoglycerate mutase">
    <location>
        <begin position="1"/>
        <end position="510"/>
    </location>
</feature>
<feature type="active site" description="Phosphoserine intermediate" evidence="1">
    <location>
        <position position="64"/>
    </location>
</feature>
<feature type="binding site" evidence="1">
    <location>
        <position position="14"/>
    </location>
    <ligand>
        <name>Mn(2+)</name>
        <dbReference type="ChEBI" id="CHEBI:29035"/>
        <label>2</label>
    </ligand>
</feature>
<feature type="binding site" evidence="1">
    <location>
        <position position="64"/>
    </location>
    <ligand>
        <name>Mn(2+)</name>
        <dbReference type="ChEBI" id="CHEBI:29035"/>
        <label>2</label>
    </ligand>
</feature>
<feature type="binding site" evidence="1">
    <location>
        <position position="125"/>
    </location>
    <ligand>
        <name>substrate</name>
    </ligand>
</feature>
<feature type="binding site" evidence="1">
    <location>
        <begin position="155"/>
        <end position="156"/>
    </location>
    <ligand>
        <name>substrate</name>
    </ligand>
</feature>
<feature type="binding site" evidence="1">
    <location>
        <position position="187"/>
    </location>
    <ligand>
        <name>substrate</name>
    </ligand>
</feature>
<feature type="binding site" evidence="1">
    <location>
        <position position="193"/>
    </location>
    <ligand>
        <name>substrate</name>
    </ligand>
</feature>
<feature type="binding site" evidence="1">
    <location>
        <begin position="259"/>
        <end position="262"/>
    </location>
    <ligand>
        <name>substrate</name>
    </ligand>
</feature>
<feature type="binding site" evidence="1">
    <location>
        <position position="332"/>
    </location>
    <ligand>
        <name>substrate</name>
    </ligand>
</feature>
<feature type="binding site" evidence="1">
    <location>
        <position position="399"/>
    </location>
    <ligand>
        <name>Mn(2+)</name>
        <dbReference type="ChEBI" id="CHEBI:29035"/>
        <label>1</label>
    </ligand>
</feature>
<feature type="binding site" evidence="1">
    <location>
        <position position="403"/>
    </location>
    <ligand>
        <name>Mn(2+)</name>
        <dbReference type="ChEBI" id="CHEBI:29035"/>
        <label>1</label>
    </ligand>
</feature>
<feature type="binding site" evidence="1">
    <location>
        <position position="440"/>
    </location>
    <ligand>
        <name>Mn(2+)</name>
        <dbReference type="ChEBI" id="CHEBI:29035"/>
        <label>2</label>
    </ligand>
</feature>
<feature type="binding site" evidence="1">
    <location>
        <position position="441"/>
    </location>
    <ligand>
        <name>Mn(2+)</name>
        <dbReference type="ChEBI" id="CHEBI:29035"/>
        <label>2</label>
    </ligand>
</feature>
<feature type="binding site" evidence="1">
    <location>
        <position position="459"/>
    </location>
    <ligand>
        <name>Mn(2+)</name>
        <dbReference type="ChEBI" id="CHEBI:29035"/>
        <label>1</label>
    </ligand>
</feature>
<dbReference type="EC" id="5.4.2.12" evidence="1"/>
<dbReference type="EMBL" id="CP000058">
    <property type="protein sequence ID" value="AAZ34103.1"/>
    <property type="molecule type" value="Genomic_DNA"/>
</dbReference>
<dbReference type="RefSeq" id="WP_011169796.1">
    <property type="nucleotide sequence ID" value="NC_005773.3"/>
</dbReference>
<dbReference type="SMR" id="Q48C87"/>
<dbReference type="KEGG" id="psp:PSPPH_4916"/>
<dbReference type="eggNOG" id="COG0696">
    <property type="taxonomic scope" value="Bacteria"/>
</dbReference>
<dbReference type="HOGENOM" id="CLU_026099_2_0_6"/>
<dbReference type="UniPathway" id="UPA00109">
    <property type="reaction ID" value="UER00186"/>
</dbReference>
<dbReference type="Proteomes" id="UP000000551">
    <property type="component" value="Chromosome"/>
</dbReference>
<dbReference type="GO" id="GO:0005829">
    <property type="term" value="C:cytosol"/>
    <property type="evidence" value="ECO:0007669"/>
    <property type="project" value="TreeGrafter"/>
</dbReference>
<dbReference type="GO" id="GO:0030145">
    <property type="term" value="F:manganese ion binding"/>
    <property type="evidence" value="ECO:0007669"/>
    <property type="project" value="UniProtKB-UniRule"/>
</dbReference>
<dbReference type="GO" id="GO:0004619">
    <property type="term" value="F:phosphoglycerate mutase activity"/>
    <property type="evidence" value="ECO:0007669"/>
    <property type="project" value="UniProtKB-EC"/>
</dbReference>
<dbReference type="GO" id="GO:0006007">
    <property type="term" value="P:glucose catabolic process"/>
    <property type="evidence" value="ECO:0007669"/>
    <property type="project" value="InterPro"/>
</dbReference>
<dbReference type="GO" id="GO:0006096">
    <property type="term" value="P:glycolytic process"/>
    <property type="evidence" value="ECO:0007669"/>
    <property type="project" value="UniProtKB-UniRule"/>
</dbReference>
<dbReference type="CDD" id="cd16010">
    <property type="entry name" value="iPGM"/>
    <property type="match status" value="1"/>
</dbReference>
<dbReference type="FunFam" id="3.40.1450.10:FF:000001">
    <property type="entry name" value="2,3-bisphosphoglycerate-independent phosphoglycerate mutase"/>
    <property type="match status" value="1"/>
</dbReference>
<dbReference type="FunFam" id="3.40.720.10:FF:000001">
    <property type="entry name" value="2,3-bisphosphoglycerate-independent phosphoglycerate mutase"/>
    <property type="match status" value="1"/>
</dbReference>
<dbReference type="Gene3D" id="3.40.720.10">
    <property type="entry name" value="Alkaline Phosphatase, subunit A"/>
    <property type="match status" value="1"/>
</dbReference>
<dbReference type="Gene3D" id="3.40.1450.10">
    <property type="entry name" value="BPG-independent phosphoglycerate mutase, domain B"/>
    <property type="match status" value="1"/>
</dbReference>
<dbReference type="HAMAP" id="MF_01038">
    <property type="entry name" value="GpmI"/>
    <property type="match status" value="1"/>
</dbReference>
<dbReference type="InterPro" id="IPR017850">
    <property type="entry name" value="Alkaline_phosphatase_core_sf"/>
</dbReference>
<dbReference type="InterPro" id="IPR011258">
    <property type="entry name" value="BPG-indep_PGM_N"/>
</dbReference>
<dbReference type="InterPro" id="IPR006124">
    <property type="entry name" value="Metalloenzyme"/>
</dbReference>
<dbReference type="InterPro" id="IPR036646">
    <property type="entry name" value="PGAM_B_sf"/>
</dbReference>
<dbReference type="InterPro" id="IPR005995">
    <property type="entry name" value="Pgm_bpd_ind"/>
</dbReference>
<dbReference type="NCBIfam" id="TIGR01307">
    <property type="entry name" value="pgm_bpd_ind"/>
    <property type="match status" value="1"/>
</dbReference>
<dbReference type="PANTHER" id="PTHR31637">
    <property type="entry name" value="2,3-BISPHOSPHOGLYCERATE-INDEPENDENT PHOSPHOGLYCERATE MUTASE"/>
    <property type="match status" value="1"/>
</dbReference>
<dbReference type="PANTHER" id="PTHR31637:SF0">
    <property type="entry name" value="2,3-BISPHOSPHOGLYCERATE-INDEPENDENT PHOSPHOGLYCERATE MUTASE"/>
    <property type="match status" value="1"/>
</dbReference>
<dbReference type="Pfam" id="PF06415">
    <property type="entry name" value="iPGM_N"/>
    <property type="match status" value="1"/>
</dbReference>
<dbReference type="Pfam" id="PF01676">
    <property type="entry name" value="Metalloenzyme"/>
    <property type="match status" value="1"/>
</dbReference>
<dbReference type="PIRSF" id="PIRSF001492">
    <property type="entry name" value="IPGAM"/>
    <property type="match status" value="1"/>
</dbReference>
<dbReference type="SUPFAM" id="SSF64158">
    <property type="entry name" value="2,3-Bisphosphoglycerate-independent phosphoglycerate mutase, substrate-binding domain"/>
    <property type="match status" value="1"/>
</dbReference>
<dbReference type="SUPFAM" id="SSF53649">
    <property type="entry name" value="Alkaline phosphatase-like"/>
    <property type="match status" value="1"/>
</dbReference>
<evidence type="ECO:0000255" key="1">
    <source>
        <dbReference type="HAMAP-Rule" id="MF_01038"/>
    </source>
</evidence>
<name>GPMI_PSE14</name>
<keyword id="KW-0324">Glycolysis</keyword>
<keyword id="KW-0413">Isomerase</keyword>
<keyword id="KW-0464">Manganese</keyword>
<keyword id="KW-0479">Metal-binding</keyword>
<comment type="function">
    <text evidence="1">Catalyzes the interconversion of 2-phosphoglycerate and 3-phosphoglycerate.</text>
</comment>
<comment type="catalytic activity">
    <reaction evidence="1">
        <text>(2R)-2-phosphoglycerate = (2R)-3-phosphoglycerate</text>
        <dbReference type="Rhea" id="RHEA:15901"/>
        <dbReference type="ChEBI" id="CHEBI:58272"/>
        <dbReference type="ChEBI" id="CHEBI:58289"/>
        <dbReference type="EC" id="5.4.2.12"/>
    </reaction>
</comment>
<comment type="cofactor">
    <cofactor evidence="1">
        <name>Mn(2+)</name>
        <dbReference type="ChEBI" id="CHEBI:29035"/>
    </cofactor>
    <text evidence="1">Binds 2 manganese ions per subunit.</text>
</comment>
<comment type="pathway">
    <text evidence="1">Carbohydrate degradation; glycolysis; pyruvate from D-glyceraldehyde 3-phosphate: step 3/5.</text>
</comment>
<comment type="subunit">
    <text evidence="1">Monomer.</text>
</comment>
<comment type="similarity">
    <text evidence="1">Belongs to the BPG-independent phosphoglycerate mutase family.</text>
</comment>
<reference key="1">
    <citation type="journal article" date="2005" name="J. Bacteriol.">
        <title>Whole-genome sequence analysis of Pseudomonas syringae pv. phaseolicola 1448A reveals divergence among pathovars in genes involved in virulence and transposition.</title>
        <authorList>
            <person name="Joardar V."/>
            <person name="Lindeberg M."/>
            <person name="Jackson R.W."/>
            <person name="Selengut J."/>
            <person name="Dodson R."/>
            <person name="Brinkac L.M."/>
            <person name="Daugherty S.C."/>
            <person name="DeBoy R.T."/>
            <person name="Durkin A.S."/>
            <person name="Gwinn Giglio M."/>
            <person name="Madupu R."/>
            <person name="Nelson W.C."/>
            <person name="Rosovitz M.J."/>
            <person name="Sullivan S.A."/>
            <person name="Crabtree J."/>
            <person name="Creasy T."/>
            <person name="Davidsen T.M."/>
            <person name="Haft D.H."/>
            <person name="Zafar N."/>
            <person name="Zhou L."/>
            <person name="Halpin R."/>
            <person name="Holley T."/>
            <person name="Khouri H.M."/>
            <person name="Feldblyum T.V."/>
            <person name="White O."/>
            <person name="Fraser C.M."/>
            <person name="Chatterjee A.K."/>
            <person name="Cartinhour S."/>
            <person name="Schneider D."/>
            <person name="Mansfield J.W."/>
            <person name="Collmer A."/>
            <person name="Buell R."/>
        </authorList>
    </citation>
    <scope>NUCLEOTIDE SEQUENCE [LARGE SCALE GENOMIC DNA]</scope>
    <source>
        <strain>1448A / Race 6</strain>
    </source>
</reference>
<accession>Q48C87</accession>
<sequence length="510" mass="55349">MTATPKPLVLIILDGFGHSESHEGNAILAAKMPVMDRLYETMPNGLISGSGMDVGLPDGQMGNSEVGHMNLGAGRVVYQDFTRVTKAIRDGEFFENPTICAAVDKAVGAGKAVHIMGLLSDGGVHSHQGHLVAMAELAVKRGAEKIYLHAFLDGRDTPPRSAKKSLELMDATFARLGKGRTATIIGRYFAMDRDNRWDRVSTAYNLIVDSTAEFHADSGVAGLEAAYARDENDEFVKATRIGEPARVEDGDAVVFMNFRADRARELTRVFVEDDFKDFERARQPKVNYVMLTQYAASIPAPSAFAAGSLKNVLGEYLADNGKTQLRIAETEKYAHVTFFFSGGREEPFPGEERILIPSPKVATYDLQPEMSAPEVTDKIVDAIEHQRYDVIIVNYANGDMVGHSGIMEAAIKAVECLDVCVGRITAALEKVGGEALITADHGNVEQMTDDSTGQAHTAHTSEPVPFVYVGKRPLKVREGGVLADVAPTMLHLLGMEKPQEMTGHSILVAK</sequence>
<organism>
    <name type="scientific">Pseudomonas savastanoi pv. phaseolicola (strain 1448A / Race 6)</name>
    <name type="common">Pseudomonas syringae pv. phaseolicola (strain 1448A / Race 6)</name>
    <dbReference type="NCBI Taxonomy" id="264730"/>
    <lineage>
        <taxon>Bacteria</taxon>
        <taxon>Pseudomonadati</taxon>
        <taxon>Pseudomonadota</taxon>
        <taxon>Gammaproteobacteria</taxon>
        <taxon>Pseudomonadales</taxon>
        <taxon>Pseudomonadaceae</taxon>
        <taxon>Pseudomonas</taxon>
    </lineage>
</organism>
<gene>
    <name evidence="1" type="primary">gpmI</name>
    <name type="ordered locus">PSPPH_4916</name>
</gene>